<reference key="1">
    <citation type="journal article" date="2009" name="Appl. Environ. Microbiol.">
        <title>Three genomes from the phylum Acidobacteria provide insight into the lifestyles of these microorganisms in soils.</title>
        <authorList>
            <person name="Ward N.L."/>
            <person name="Challacombe J.F."/>
            <person name="Janssen P.H."/>
            <person name="Henrissat B."/>
            <person name="Coutinho P.M."/>
            <person name="Wu M."/>
            <person name="Xie G."/>
            <person name="Haft D.H."/>
            <person name="Sait M."/>
            <person name="Badger J."/>
            <person name="Barabote R.D."/>
            <person name="Bradley B."/>
            <person name="Brettin T.S."/>
            <person name="Brinkac L.M."/>
            <person name="Bruce D."/>
            <person name="Creasy T."/>
            <person name="Daugherty S.C."/>
            <person name="Davidsen T.M."/>
            <person name="DeBoy R.T."/>
            <person name="Detter J.C."/>
            <person name="Dodson R.J."/>
            <person name="Durkin A.S."/>
            <person name="Ganapathy A."/>
            <person name="Gwinn-Giglio M."/>
            <person name="Han C.S."/>
            <person name="Khouri H."/>
            <person name="Kiss H."/>
            <person name="Kothari S.P."/>
            <person name="Madupu R."/>
            <person name="Nelson K.E."/>
            <person name="Nelson W.C."/>
            <person name="Paulsen I."/>
            <person name="Penn K."/>
            <person name="Ren Q."/>
            <person name="Rosovitz M.J."/>
            <person name="Selengut J.D."/>
            <person name="Shrivastava S."/>
            <person name="Sullivan S.A."/>
            <person name="Tapia R."/>
            <person name="Thompson L.S."/>
            <person name="Watkins K.L."/>
            <person name="Yang Q."/>
            <person name="Yu C."/>
            <person name="Zafar N."/>
            <person name="Zhou L."/>
            <person name="Kuske C.R."/>
        </authorList>
    </citation>
    <scope>NUCLEOTIDE SEQUENCE [LARGE SCALE GENOMIC DNA]</scope>
    <source>
        <strain>Ellin6076</strain>
    </source>
</reference>
<dbReference type="EC" id="4.2.1.70" evidence="1"/>
<dbReference type="EMBL" id="CP000473">
    <property type="protein sequence ID" value="ABJ87582.1"/>
    <property type="molecule type" value="Genomic_DNA"/>
</dbReference>
<dbReference type="SMR" id="Q01RY8"/>
<dbReference type="FunCoup" id="Q01RY8">
    <property type="interactions" value="246"/>
</dbReference>
<dbReference type="STRING" id="234267.Acid_6660"/>
<dbReference type="KEGG" id="sus:Acid_6660"/>
<dbReference type="eggNOG" id="COG2313">
    <property type="taxonomic scope" value="Bacteria"/>
</dbReference>
<dbReference type="HOGENOM" id="CLU_012201_0_1_0"/>
<dbReference type="InParanoid" id="Q01RY8"/>
<dbReference type="OrthoDB" id="9805870at2"/>
<dbReference type="GO" id="GO:0005737">
    <property type="term" value="C:cytoplasm"/>
    <property type="evidence" value="ECO:0007669"/>
    <property type="project" value="TreeGrafter"/>
</dbReference>
<dbReference type="GO" id="GO:0016798">
    <property type="term" value="F:hydrolase activity, acting on glycosyl bonds"/>
    <property type="evidence" value="ECO:0007669"/>
    <property type="project" value="UniProtKB-KW"/>
</dbReference>
<dbReference type="GO" id="GO:0046872">
    <property type="term" value="F:metal ion binding"/>
    <property type="evidence" value="ECO:0007669"/>
    <property type="project" value="UniProtKB-KW"/>
</dbReference>
<dbReference type="GO" id="GO:0004730">
    <property type="term" value="F:pseudouridylate synthase activity"/>
    <property type="evidence" value="ECO:0007669"/>
    <property type="project" value="UniProtKB-UniRule"/>
</dbReference>
<dbReference type="GO" id="GO:0046113">
    <property type="term" value="P:nucleobase catabolic process"/>
    <property type="evidence" value="ECO:0007669"/>
    <property type="project" value="UniProtKB-UniRule"/>
</dbReference>
<dbReference type="Gene3D" id="3.40.1790.10">
    <property type="entry name" value="Indigoidine synthase domain"/>
    <property type="match status" value="1"/>
</dbReference>
<dbReference type="HAMAP" id="MF_01876">
    <property type="entry name" value="PsiMP_glycosidase"/>
    <property type="match status" value="1"/>
</dbReference>
<dbReference type="InterPro" id="IPR022830">
    <property type="entry name" value="Indigdn_synthA-like"/>
</dbReference>
<dbReference type="InterPro" id="IPR007342">
    <property type="entry name" value="PsuG"/>
</dbReference>
<dbReference type="PANTHER" id="PTHR42909:SF1">
    <property type="entry name" value="CARBOHYDRATE KINASE PFKB DOMAIN-CONTAINING PROTEIN"/>
    <property type="match status" value="1"/>
</dbReference>
<dbReference type="PANTHER" id="PTHR42909">
    <property type="entry name" value="ZGC:136858"/>
    <property type="match status" value="1"/>
</dbReference>
<dbReference type="Pfam" id="PF04227">
    <property type="entry name" value="Indigoidine_A"/>
    <property type="match status" value="1"/>
</dbReference>
<dbReference type="SUPFAM" id="SSF110581">
    <property type="entry name" value="Indigoidine synthase A-like"/>
    <property type="match status" value="1"/>
</dbReference>
<feature type="chain" id="PRO_0000390548" description="Pseudouridine-5'-phosphate glycosidase">
    <location>
        <begin position="1"/>
        <end position="299"/>
    </location>
</feature>
<feature type="active site" description="Proton donor" evidence="1">
    <location>
        <position position="23"/>
    </location>
</feature>
<feature type="active site" description="Nucleophile" evidence="1">
    <location>
        <position position="157"/>
    </location>
</feature>
<feature type="binding site" evidence="1">
    <location>
        <position position="84"/>
    </location>
    <ligand>
        <name>substrate</name>
    </ligand>
</feature>
<feature type="binding site" evidence="1">
    <location>
        <position position="104"/>
    </location>
    <ligand>
        <name>substrate</name>
    </ligand>
</feature>
<feature type="binding site" evidence="1">
    <location>
        <position position="136"/>
    </location>
    <ligand>
        <name>Mn(2+)</name>
        <dbReference type="ChEBI" id="CHEBI:29035"/>
    </ligand>
</feature>
<feature type="binding site" evidence="1">
    <location>
        <begin position="138"/>
        <end position="140"/>
    </location>
    <ligand>
        <name>substrate</name>
    </ligand>
</feature>
<comment type="function">
    <text evidence="1">Catalyzes the reversible cleavage of pseudouridine 5'-phosphate (PsiMP) to ribose 5-phosphate and uracil. Functions biologically in the cleavage direction, as part of a pseudouridine degradation pathway.</text>
</comment>
<comment type="catalytic activity">
    <reaction evidence="1">
        <text>D-ribose 5-phosphate + uracil = psi-UMP + H2O</text>
        <dbReference type="Rhea" id="RHEA:18337"/>
        <dbReference type="ChEBI" id="CHEBI:15377"/>
        <dbReference type="ChEBI" id="CHEBI:17568"/>
        <dbReference type="ChEBI" id="CHEBI:58380"/>
        <dbReference type="ChEBI" id="CHEBI:78346"/>
        <dbReference type="EC" id="4.2.1.70"/>
    </reaction>
</comment>
<comment type="cofactor">
    <cofactor evidence="1">
        <name>Mn(2+)</name>
        <dbReference type="ChEBI" id="CHEBI:29035"/>
    </cofactor>
    <text evidence="1">Binds 1 Mn(2+) ion per subunit.</text>
</comment>
<comment type="subunit">
    <text evidence="1">Homotrimer.</text>
</comment>
<comment type="similarity">
    <text evidence="1">Belongs to the pseudouridine-5'-phosphate glycosidase family.</text>
</comment>
<gene>
    <name evidence="1" type="primary">psuG</name>
    <name type="ordered locus">Acid_6660</name>
</gene>
<keyword id="KW-0326">Glycosidase</keyword>
<keyword id="KW-0378">Hydrolase</keyword>
<keyword id="KW-0456">Lyase</keyword>
<keyword id="KW-0464">Manganese</keyword>
<keyword id="KW-0479">Metal-binding</keyword>
<protein>
    <recommendedName>
        <fullName evidence="1">Pseudouridine-5'-phosphate glycosidase</fullName>
        <shortName evidence="1">PsiMP glycosidase</shortName>
        <ecNumber evidence="1">4.2.1.70</ecNumber>
    </recommendedName>
</protein>
<accession>Q01RY8</accession>
<name>PSUG_SOLUE</name>
<proteinExistence type="inferred from homology"/>
<evidence type="ECO:0000255" key="1">
    <source>
        <dbReference type="HAMAP-Rule" id="MF_01876"/>
    </source>
</evidence>
<sequence>MHLKIDPEVRRALQGKRPVVALESTIITHGMPYPENLATARSLESQVRAGGAVPATIAVIGGVICVGLSDKELEWLAGAKNVLKLSRNDLPYAIATQKIGATTVAATMIAANLAGIRIFATGGIGGVHRGAETTFDISADLEEFARTSVAVVCAGAKAILDLPKTLEYLETRGVPVIAYGTDEFPAFWSRQSGLKAPLRLDTPAEIARFLEVKWSLNLTGGAVICNPVPAEDEIPFHEMRTFIDSAVDEAERYGIKGKAVTPYILARIVELTGGRSLRTNMALAQNNARLAAELATHLQ</sequence>
<organism>
    <name type="scientific">Solibacter usitatus (strain Ellin6076)</name>
    <dbReference type="NCBI Taxonomy" id="234267"/>
    <lineage>
        <taxon>Bacteria</taxon>
        <taxon>Pseudomonadati</taxon>
        <taxon>Acidobacteriota</taxon>
        <taxon>Terriglobia</taxon>
        <taxon>Bryobacterales</taxon>
        <taxon>Solibacteraceae</taxon>
        <taxon>Candidatus Solibacter</taxon>
    </lineage>
</organism>